<feature type="chain" id="PRO_0000096754" description="Nuclear control of ATPase protein 2">
    <location>
        <begin position="1"/>
        <end position="616"/>
    </location>
</feature>
<feature type="transmembrane region" description="Helical" evidence="1">
    <location>
        <begin position="321"/>
        <end position="341"/>
    </location>
</feature>
<feature type="transmembrane region" description="Helical" evidence="1">
    <location>
        <begin position="488"/>
        <end position="508"/>
    </location>
</feature>
<feature type="modified residue" description="Phosphoserine" evidence="7">
    <location>
        <position position="29"/>
    </location>
</feature>
<reference key="1">
    <citation type="journal article" date="1995" name="J. Mol. Biol.">
        <title>NCA2, a second nuclear gene required for the control of mitochondrial synthesis of subunits 6 and 8 of ATP synthase in Saccharomyces cerevisiae.</title>
        <authorList>
            <person name="Camougrand N."/>
            <person name="Pelissier P."/>
            <person name="Velours G."/>
            <person name="Guerin M."/>
        </authorList>
    </citation>
    <scope>NUCLEOTIDE SEQUENCE [GENOMIC DNA]</scope>
    <scope>FUNCTION</scope>
</reference>
<reference key="2">
    <citation type="journal article" date="1997" name="Nature">
        <title>The nucleotide sequence of Saccharomyces cerevisiae chromosome XVI.</title>
        <authorList>
            <person name="Bussey H."/>
            <person name="Storms R.K."/>
            <person name="Ahmed A."/>
            <person name="Albermann K."/>
            <person name="Allen E."/>
            <person name="Ansorge W."/>
            <person name="Araujo R."/>
            <person name="Aparicio A."/>
            <person name="Barrell B.G."/>
            <person name="Badcock K."/>
            <person name="Benes V."/>
            <person name="Botstein D."/>
            <person name="Bowman S."/>
            <person name="Brueckner M."/>
            <person name="Carpenter J."/>
            <person name="Cherry J.M."/>
            <person name="Chung E."/>
            <person name="Churcher C.M."/>
            <person name="Coster F."/>
            <person name="Davis K."/>
            <person name="Davis R.W."/>
            <person name="Dietrich F.S."/>
            <person name="Delius H."/>
            <person name="DiPaolo T."/>
            <person name="Dubois E."/>
            <person name="Duesterhoeft A."/>
            <person name="Duncan M."/>
            <person name="Floeth M."/>
            <person name="Fortin N."/>
            <person name="Friesen J.D."/>
            <person name="Fritz C."/>
            <person name="Goffeau A."/>
            <person name="Hall J."/>
            <person name="Hebling U."/>
            <person name="Heumann K."/>
            <person name="Hilbert H."/>
            <person name="Hillier L.W."/>
            <person name="Hunicke-Smith S."/>
            <person name="Hyman R.W."/>
            <person name="Johnston M."/>
            <person name="Kalman S."/>
            <person name="Kleine K."/>
            <person name="Komp C."/>
            <person name="Kurdi O."/>
            <person name="Lashkari D."/>
            <person name="Lew H."/>
            <person name="Lin A."/>
            <person name="Lin D."/>
            <person name="Louis E.J."/>
            <person name="Marathe R."/>
            <person name="Messenguy F."/>
            <person name="Mewes H.-W."/>
            <person name="Mirtipati S."/>
            <person name="Moestl D."/>
            <person name="Mueller-Auer S."/>
            <person name="Namath A."/>
            <person name="Nentwich U."/>
            <person name="Oefner P."/>
            <person name="Pearson D."/>
            <person name="Petel F.X."/>
            <person name="Pohl T.M."/>
            <person name="Purnelle B."/>
            <person name="Rajandream M.A."/>
            <person name="Rechmann S."/>
            <person name="Rieger M."/>
            <person name="Riles L."/>
            <person name="Roberts D."/>
            <person name="Schaefer M."/>
            <person name="Scharfe M."/>
            <person name="Scherens B."/>
            <person name="Schramm S."/>
            <person name="Schroeder M."/>
            <person name="Sdicu A.-M."/>
            <person name="Tettelin H."/>
            <person name="Urrestarazu L.A."/>
            <person name="Ushinsky S."/>
            <person name="Vierendeels F."/>
            <person name="Vissers S."/>
            <person name="Voss H."/>
            <person name="Walsh S.V."/>
            <person name="Wambutt R."/>
            <person name="Wang Y."/>
            <person name="Wedler E."/>
            <person name="Wedler H."/>
            <person name="Winnett E."/>
            <person name="Zhong W.-W."/>
            <person name="Zollner A."/>
            <person name="Vo D.H."/>
            <person name="Hani J."/>
        </authorList>
    </citation>
    <scope>NUCLEOTIDE SEQUENCE [LARGE SCALE GENOMIC DNA]</scope>
    <source>
        <strain>ATCC 204508 / S288c</strain>
    </source>
</reference>
<reference key="3">
    <citation type="journal article" date="2014" name="G3 (Bethesda)">
        <title>The reference genome sequence of Saccharomyces cerevisiae: Then and now.</title>
        <authorList>
            <person name="Engel S.R."/>
            <person name="Dietrich F.S."/>
            <person name="Fisk D.G."/>
            <person name="Binkley G."/>
            <person name="Balakrishnan R."/>
            <person name="Costanzo M.C."/>
            <person name="Dwight S.S."/>
            <person name="Hitz B.C."/>
            <person name="Karra K."/>
            <person name="Nash R.S."/>
            <person name="Weng S."/>
            <person name="Wong E.D."/>
            <person name="Lloyd P."/>
            <person name="Skrzypek M.S."/>
            <person name="Miyasato S.R."/>
            <person name="Simison M."/>
            <person name="Cherry J.M."/>
        </authorList>
    </citation>
    <scope>GENOME REANNOTATION</scope>
    <source>
        <strain>ATCC 204508 / S288c</strain>
    </source>
</reference>
<reference key="4">
    <citation type="journal article" date="2003" name="Nature">
        <title>Global analysis of protein localization in budding yeast.</title>
        <authorList>
            <person name="Huh W.-K."/>
            <person name="Falvo J.V."/>
            <person name="Gerke L.C."/>
            <person name="Carroll A.S."/>
            <person name="Howson R.W."/>
            <person name="Weissman J.S."/>
            <person name="O'Shea E.K."/>
        </authorList>
    </citation>
    <scope>SUBCELLULAR LOCATION [LARGE SCALE ANALYSIS]</scope>
</reference>
<reference key="5">
    <citation type="journal article" date="2003" name="Nature">
        <title>Global analysis of protein expression in yeast.</title>
        <authorList>
            <person name="Ghaemmaghami S."/>
            <person name="Huh W.-K."/>
            <person name="Bower K."/>
            <person name="Howson R.W."/>
            <person name="Belle A."/>
            <person name="Dephoure N."/>
            <person name="O'Shea E.K."/>
            <person name="Weissman J.S."/>
        </authorList>
    </citation>
    <scope>LEVEL OF PROTEIN EXPRESSION [LARGE SCALE ANALYSIS]</scope>
</reference>
<reference key="6">
    <citation type="journal article" date="2003" name="Proc. Natl. Acad. Sci. U.S.A.">
        <title>The proteome of Saccharomyces cerevisiae mitochondria.</title>
        <authorList>
            <person name="Sickmann A."/>
            <person name="Reinders J."/>
            <person name="Wagner Y."/>
            <person name="Joppich C."/>
            <person name="Zahedi R.P."/>
            <person name="Meyer H.E."/>
            <person name="Schoenfisch B."/>
            <person name="Perschil I."/>
            <person name="Chacinska A."/>
            <person name="Guiard B."/>
            <person name="Rehling P."/>
            <person name="Pfanner N."/>
            <person name="Meisinger C."/>
        </authorList>
    </citation>
    <scope>SUBCELLULAR LOCATION [LARGE SCALE ANALYSIS]</scope>
    <source>
        <strain>ATCC 76625 / YPH499</strain>
    </source>
</reference>
<reference key="7">
    <citation type="journal article" date="2008" name="Mol. Cell. Proteomics">
        <title>A multidimensional chromatography technology for in-depth phosphoproteome analysis.</title>
        <authorList>
            <person name="Albuquerque C.P."/>
            <person name="Smolka M.B."/>
            <person name="Payne S.H."/>
            <person name="Bafna V."/>
            <person name="Eng J."/>
            <person name="Zhou H."/>
        </authorList>
    </citation>
    <scope>PHOSPHORYLATION [LARGE SCALE ANALYSIS] AT SER-29</scope>
    <scope>IDENTIFICATION BY MASS SPECTROMETRY [LARGE SCALE ANALYSIS]</scope>
</reference>
<organism>
    <name type="scientific">Saccharomyces cerevisiae (strain ATCC 204508 / S288c)</name>
    <name type="common">Baker's yeast</name>
    <dbReference type="NCBI Taxonomy" id="559292"/>
    <lineage>
        <taxon>Eukaryota</taxon>
        <taxon>Fungi</taxon>
        <taxon>Dikarya</taxon>
        <taxon>Ascomycota</taxon>
        <taxon>Saccharomycotina</taxon>
        <taxon>Saccharomycetes</taxon>
        <taxon>Saccharomycetales</taxon>
        <taxon>Saccharomycetaceae</taxon>
        <taxon>Saccharomyces</taxon>
    </lineage>
</organism>
<proteinExistence type="evidence at protein level"/>
<comment type="function">
    <text evidence="5">Involved in the mitochondrial expression of subunits 6 and 8 of the F0-F1 ATP synthase.</text>
</comment>
<comment type="subcellular location">
    <subcellularLocation>
        <location evidence="2 4">Mitochondrion membrane</location>
        <topology evidence="2 4">Multi-pass membrane protein</topology>
    </subcellularLocation>
</comment>
<comment type="miscellaneous">
    <text evidence="3">Present with 2940 molecules/cell in log phase SD medium.</text>
</comment>
<comment type="similarity">
    <text evidence="6">Belongs to the NCA2 family.</text>
</comment>
<evidence type="ECO:0000255" key="1"/>
<evidence type="ECO:0000269" key="2">
    <source>
    </source>
</evidence>
<evidence type="ECO:0000269" key="3">
    <source>
    </source>
</evidence>
<evidence type="ECO:0000269" key="4">
    <source>
    </source>
</evidence>
<evidence type="ECO:0000269" key="5">
    <source>
    </source>
</evidence>
<evidence type="ECO:0000305" key="6"/>
<evidence type="ECO:0007744" key="7">
    <source>
    </source>
</evidence>
<sequence>MIINRRILKSFEEISHSLEESLREVAFDSQQQLIQDVREENEELSRLQDQLQLIRSIVEKICISIKTDNIDSYCSVPFDLLYNICKDIADPSSFEDGDLQYLVSQAIFEYIILLCYYSVTNECVQGLPAVYEAEQYYKTVSDSILKSFLYCLQNSVSTIRLLSQTVLKDVNKKKLSHQKWSLKALSVDLLEKIRPRINKFMVIRNFRFVGLPKKPIEIASLVSDIPRGIVHERLDMVTQSSKYYTIKLGQLITEFDQQPEENGMFTEVHLPNYERRLKSLQDFFGLAMSDSNLLDVIRCSAKFHKDHPLRRFTKPSILTRYWPSILLCLLYGPSSVMSLWNSRYFIQDFIKTNVVDFAKGLILNWLWAPLKQVWSTVKHDEGSAISVTSQETLNSDMDSLTRMIVSFVVDNSDSTSNSPIDPILLSTKVEHGDLTEFMEIYETQLHHPIKNIATGGLVRSLLIQLQKTKVDGSMALNGIDKMLKSQQLVFGVVALSPALVILYSSIVALKRFVKLGNVWSNEKRYREQISISLNNVERVLNYSKQGADADEEHLNQGLLVIEVSNLYKLGSFLIPRSRKKEWFRDVEELVDTNLDSGAHINVVNRIYHVYGRFLIH</sequence>
<name>NCA2_YEAST</name>
<gene>
    <name type="primary">NCA2</name>
    <name type="ordered locus">YPR155C</name>
</gene>
<protein>
    <recommendedName>
        <fullName>Nuclear control of ATPase protein 2</fullName>
    </recommendedName>
</protein>
<dbReference type="EMBL" id="L20785">
    <property type="protein sequence ID" value="AAA74401.1"/>
    <property type="molecule type" value="Genomic_DNA"/>
</dbReference>
<dbReference type="EMBL" id="U28371">
    <property type="protein sequence ID" value="AAB68052.1"/>
    <property type="molecule type" value="Genomic_DNA"/>
</dbReference>
<dbReference type="EMBL" id="BK006949">
    <property type="protein sequence ID" value="DAA11567.1"/>
    <property type="molecule type" value="Genomic_DNA"/>
</dbReference>
<dbReference type="PIR" id="S54389">
    <property type="entry name" value="S54389"/>
</dbReference>
<dbReference type="RefSeq" id="NP_015481.1">
    <property type="nucleotide sequence ID" value="NM_001184252.1"/>
</dbReference>
<dbReference type="BioGRID" id="36322">
    <property type="interactions" value="82"/>
</dbReference>
<dbReference type="DIP" id="DIP-3825N"/>
<dbReference type="FunCoup" id="Q12374">
    <property type="interactions" value="58"/>
</dbReference>
<dbReference type="IntAct" id="Q12374">
    <property type="interactions" value="3"/>
</dbReference>
<dbReference type="MINT" id="Q12374"/>
<dbReference type="STRING" id="4932.YPR155C"/>
<dbReference type="iPTMnet" id="Q12374"/>
<dbReference type="PaxDb" id="4932-YPR155C"/>
<dbReference type="PeptideAtlas" id="Q12374"/>
<dbReference type="EnsemblFungi" id="YPR155C_mRNA">
    <property type="protein sequence ID" value="YPR155C"/>
    <property type="gene ID" value="YPR155C"/>
</dbReference>
<dbReference type="GeneID" id="856278"/>
<dbReference type="KEGG" id="sce:YPR155C"/>
<dbReference type="AGR" id="SGD:S000006359"/>
<dbReference type="SGD" id="S000006359">
    <property type="gene designation" value="NCA2"/>
</dbReference>
<dbReference type="VEuPathDB" id="FungiDB:YPR155C"/>
<dbReference type="eggNOG" id="ENOG502QTT6">
    <property type="taxonomic scope" value="Eukaryota"/>
</dbReference>
<dbReference type="HOGENOM" id="CLU_008227_2_0_1"/>
<dbReference type="InParanoid" id="Q12374"/>
<dbReference type="OMA" id="NRIYHVY"/>
<dbReference type="OrthoDB" id="413313at2759"/>
<dbReference type="BioCyc" id="YEAST:G3O-34286-MONOMER"/>
<dbReference type="BioGRID-ORCS" id="856278">
    <property type="hits" value="0 hits in 10 CRISPR screens"/>
</dbReference>
<dbReference type="PRO" id="PR:Q12374"/>
<dbReference type="Proteomes" id="UP000002311">
    <property type="component" value="Chromosome XVI"/>
</dbReference>
<dbReference type="RNAct" id="Q12374">
    <property type="molecule type" value="protein"/>
</dbReference>
<dbReference type="GO" id="GO:0005741">
    <property type="term" value="C:mitochondrial outer membrane"/>
    <property type="evidence" value="ECO:0007005"/>
    <property type="project" value="SGD"/>
</dbReference>
<dbReference type="GO" id="GO:0005739">
    <property type="term" value="C:mitochondrion"/>
    <property type="evidence" value="ECO:0007005"/>
    <property type="project" value="SGD"/>
</dbReference>
<dbReference type="GO" id="GO:0009060">
    <property type="term" value="P:aerobic respiration"/>
    <property type="evidence" value="ECO:0000315"/>
    <property type="project" value="SGD"/>
</dbReference>
<dbReference type="GO" id="GO:0016071">
    <property type="term" value="P:mRNA metabolic process"/>
    <property type="evidence" value="ECO:0000315"/>
    <property type="project" value="SGD"/>
</dbReference>
<dbReference type="InterPro" id="IPR013946">
    <property type="entry name" value="NCA2"/>
</dbReference>
<dbReference type="PANTHER" id="PTHR28234">
    <property type="entry name" value="NUCLEAR CONTROL OF ATPASE PROTEIN 2"/>
    <property type="match status" value="1"/>
</dbReference>
<dbReference type="PANTHER" id="PTHR28234:SF1">
    <property type="entry name" value="NUCLEAR CONTROL OF ATPASE PROTEIN 2"/>
    <property type="match status" value="1"/>
</dbReference>
<dbReference type="Pfam" id="PF08637">
    <property type="entry name" value="NCA2"/>
    <property type="match status" value="1"/>
</dbReference>
<accession>Q12374</accession>
<accession>D6W4F1</accession>
<keyword id="KW-0472">Membrane</keyword>
<keyword id="KW-0496">Mitochondrion</keyword>
<keyword id="KW-0597">Phosphoprotein</keyword>
<keyword id="KW-1185">Reference proteome</keyword>
<keyword id="KW-0812">Transmembrane</keyword>
<keyword id="KW-1133">Transmembrane helix</keyword>